<keyword id="KW-0002">3D-structure</keyword>
<keyword id="KW-0007">Acetylation</keyword>
<keyword id="KW-0963">Cytoplasm</keyword>
<keyword id="KW-0903">Direct protein sequencing</keyword>
<keyword id="KW-0413">Isomerase</keyword>
<keyword id="KW-0496">Mitochondrion</keyword>
<keyword id="KW-0597">Phosphoprotein</keyword>
<keyword id="KW-1185">Reference proteome</keyword>
<keyword id="KW-0697">Rotamase</keyword>
<protein>
    <recommendedName>
        <fullName>FK506-binding protein 1</fullName>
        <shortName>FKBP</shortName>
    </recommendedName>
    <alternativeName>
        <fullName>12-kDa cytosolic FK506-binding protein</fullName>
        <shortName>FKBP-12</shortName>
    </alternativeName>
    <alternativeName>
        <fullName>Peptidyl-prolyl cis-trans isomerase</fullName>
        <shortName>PPIase</shortName>
        <ecNumber evidence="6">5.2.1.8</ecNumber>
    </alternativeName>
    <alternativeName>
        <fullName evidence="9">Rapamycin-binding protein</fullName>
    </alternativeName>
</protein>
<dbReference type="EC" id="5.2.1.8" evidence="6"/>
<dbReference type="EMBL" id="Z46843">
    <property type="protein sequence ID" value="CAA86890.1"/>
    <property type="molecule type" value="Genomic_DNA"/>
</dbReference>
<dbReference type="EMBL" id="M57967">
    <property type="protein sequence ID" value="AAA03564.1"/>
    <property type="molecule type" value="Unassigned_DNA"/>
</dbReference>
<dbReference type="EMBL" id="M60877">
    <property type="protein sequence ID" value="AAA34607.1"/>
    <property type="molecule type" value="Genomic_DNA"/>
</dbReference>
<dbReference type="EMBL" id="M63892">
    <property type="protein sequence ID" value="AAA34962.1"/>
    <property type="molecule type" value="mRNA"/>
</dbReference>
<dbReference type="EMBL" id="Z71411">
    <property type="protein sequence ID" value="CAA96017.1"/>
    <property type="molecule type" value="Genomic_DNA"/>
</dbReference>
<dbReference type="EMBL" id="AY557997">
    <property type="protein sequence ID" value="AAS56323.1"/>
    <property type="molecule type" value="Genomic_DNA"/>
</dbReference>
<dbReference type="EMBL" id="BK006947">
    <property type="protein sequence ID" value="DAA10413.1"/>
    <property type="molecule type" value="Genomic_DNA"/>
</dbReference>
<dbReference type="PIR" id="A37870">
    <property type="entry name" value="A33146"/>
</dbReference>
<dbReference type="RefSeq" id="NP_014264.1">
    <property type="nucleotide sequence ID" value="NM_001182973.1"/>
</dbReference>
<dbReference type="PDB" id="1YAT">
    <property type="method" value="X-ray"/>
    <property type="resolution" value="2.50 A"/>
    <property type="chains" value="A=2-114"/>
</dbReference>
<dbReference type="PDB" id="7ZW0">
    <property type="method" value="EM"/>
    <property type="resolution" value="2.40 A"/>
    <property type="chains" value="sk=1-114"/>
</dbReference>
<dbReference type="PDBsum" id="1YAT"/>
<dbReference type="PDBsum" id="7ZW0"/>
<dbReference type="EMDB" id="EMD-14990"/>
<dbReference type="SMR" id="P20081"/>
<dbReference type="BioGRID" id="35691">
    <property type="interactions" value="343"/>
</dbReference>
<dbReference type="DIP" id="DIP-1263N"/>
<dbReference type="FunCoup" id="P20081">
    <property type="interactions" value="509"/>
</dbReference>
<dbReference type="IntAct" id="P20081">
    <property type="interactions" value="68"/>
</dbReference>
<dbReference type="MINT" id="P20081"/>
<dbReference type="STRING" id="4932.YNL135C"/>
<dbReference type="iPTMnet" id="P20081"/>
<dbReference type="PaxDb" id="4932-YNL135C"/>
<dbReference type="PeptideAtlas" id="P20081"/>
<dbReference type="TopDownProteomics" id="P20081"/>
<dbReference type="EnsemblFungi" id="YNL135C_mRNA">
    <property type="protein sequence ID" value="YNL135C"/>
    <property type="gene ID" value="YNL135C"/>
</dbReference>
<dbReference type="GeneID" id="855587"/>
<dbReference type="KEGG" id="sce:YNL135C"/>
<dbReference type="AGR" id="SGD:S000005079"/>
<dbReference type="SGD" id="S000005079">
    <property type="gene designation" value="FPR1"/>
</dbReference>
<dbReference type="VEuPathDB" id="FungiDB:YNL135C"/>
<dbReference type="eggNOG" id="KOG0544">
    <property type="taxonomic scope" value="Eukaryota"/>
</dbReference>
<dbReference type="GeneTree" id="ENSGT00980000202019"/>
<dbReference type="HOGENOM" id="CLU_013615_12_1_1"/>
<dbReference type="InParanoid" id="P20081"/>
<dbReference type="OMA" id="EQFDASW"/>
<dbReference type="OrthoDB" id="1902587at2759"/>
<dbReference type="BioCyc" id="YEAST:YNL135C-MONOMER"/>
<dbReference type="Reactome" id="R-SCE-166208">
    <property type="pathway name" value="mTORC1-mediated signalling"/>
</dbReference>
<dbReference type="Reactome" id="R-SCE-2025928">
    <property type="pathway name" value="Calcineurin activates NFAT"/>
</dbReference>
<dbReference type="BioGRID-ORCS" id="855587">
    <property type="hits" value="6 hits in 10 CRISPR screens"/>
</dbReference>
<dbReference type="CD-CODE" id="E03F929F">
    <property type="entry name" value="Stress granule"/>
</dbReference>
<dbReference type="EvolutionaryTrace" id="P20081"/>
<dbReference type="PRO" id="PR:P20081"/>
<dbReference type="Proteomes" id="UP000002311">
    <property type="component" value="Chromosome XIV"/>
</dbReference>
<dbReference type="RNAct" id="P20081">
    <property type="molecule type" value="protein"/>
</dbReference>
<dbReference type="GO" id="GO:0005737">
    <property type="term" value="C:cytoplasm"/>
    <property type="evidence" value="ECO:0000314"/>
    <property type="project" value="SGD"/>
</dbReference>
<dbReference type="GO" id="GO:0005739">
    <property type="term" value="C:mitochondrion"/>
    <property type="evidence" value="ECO:0007005"/>
    <property type="project" value="SGD"/>
</dbReference>
<dbReference type="GO" id="GO:0005634">
    <property type="term" value="C:nucleus"/>
    <property type="evidence" value="ECO:0007005"/>
    <property type="project" value="SGD"/>
</dbReference>
<dbReference type="GO" id="GO:0001228">
    <property type="term" value="F:DNA-binding transcription activator activity, RNA polymerase II-specific"/>
    <property type="evidence" value="ECO:0000315"/>
    <property type="project" value="SGD"/>
</dbReference>
<dbReference type="GO" id="GO:0005527">
    <property type="term" value="F:macrolide binding"/>
    <property type="evidence" value="ECO:0000314"/>
    <property type="project" value="SGD"/>
</dbReference>
<dbReference type="GO" id="GO:0003755">
    <property type="term" value="F:peptidyl-prolyl cis-trans isomerase activity"/>
    <property type="evidence" value="ECO:0000314"/>
    <property type="project" value="SGD"/>
</dbReference>
<dbReference type="GO" id="GO:0044183">
    <property type="term" value="F:protein folding chaperone"/>
    <property type="evidence" value="ECO:0000314"/>
    <property type="project" value="SGD"/>
</dbReference>
<dbReference type="GO" id="GO:0006325">
    <property type="term" value="P:chromatin organization"/>
    <property type="evidence" value="ECO:0000316"/>
    <property type="project" value="SGD"/>
</dbReference>
<dbReference type="GO" id="GO:1901711">
    <property type="term" value="P:negative regulation of homoserine biosynthetic process"/>
    <property type="evidence" value="ECO:0000315"/>
    <property type="project" value="UniProtKB"/>
</dbReference>
<dbReference type="GO" id="GO:0070651">
    <property type="term" value="P:nonfunctional rRNA decay"/>
    <property type="evidence" value="ECO:0000314"/>
    <property type="project" value="SGD"/>
</dbReference>
<dbReference type="GO" id="GO:0006457">
    <property type="term" value="P:protein folding"/>
    <property type="evidence" value="ECO:0000315"/>
    <property type="project" value="SGD"/>
</dbReference>
<dbReference type="GO" id="GO:1903644">
    <property type="term" value="P:regulation of chaperone-mediated protein folding"/>
    <property type="evidence" value="ECO:0000314"/>
    <property type="project" value="SGD"/>
</dbReference>
<dbReference type="GO" id="GO:1901710">
    <property type="term" value="P:regulation of homoserine biosynthetic process"/>
    <property type="evidence" value="ECO:0000316"/>
    <property type="project" value="SGD"/>
</dbReference>
<dbReference type="GO" id="GO:0006366">
    <property type="term" value="P:transcription by RNA polymerase II"/>
    <property type="evidence" value="ECO:0000315"/>
    <property type="project" value="SGD"/>
</dbReference>
<dbReference type="FunFam" id="3.10.50.40:FF:000025">
    <property type="entry name" value="Peptidylprolyl isomerase"/>
    <property type="match status" value="1"/>
</dbReference>
<dbReference type="Gene3D" id="3.10.50.40">
    <property type="match status" value="1"/>
</dbReference>
<dbReference type="InterPro" id="IPR050689">
    <property type="entry name" value="FKBP-type_PPIase"/>
</dbReference>
<dbReference type="InterPro" id="IPR046357">
    <property type="entry name" value="PPIase_dom_sf"/>
</dbReference>
<dbReference type="InterPro" id="IPR001179">
    <property type="entry name" value="PPIase_FKBP_dom"/>
</dbReference>
<dbReference type="PANTHER" id="PTHR10516:SF443">
    <property type="entry name" value="FK506-BINDING PROTEIN 59-RELATED"/>
    <property type="match status" value="1"/>
</dbReference>
<dbReference type="PANTHER" id="PTHR10516">
    <property type="entry name" value="PEPTIDYL-PROLYL CIS-TRANS ISOMERASE"/>
    <property type="match status" value="1"/>
</dbReference>
<dbReference type="Pfam" id="PF00254">
    <property type="entry name" value="FKBP_C"/>
    <property type="match status" value="1"/>
</dbReference>
<dbReference type="SUPFAM" id="SSF54534">
    <property type="entry name" value="FKBP-like"/>
    <property type="match status" value="1"/>
</dbReference>
<dbReference type="PROSITE" id="PS50059">
    <property type="entry name" value="FKBP_PPIASE"/>
    <property type="match status" value="1"/>
</dbReference>
<accession>P20081</accession>
<accession>D6W147</accession>
<comment type="function">
    <text evidence="6 8">PPIases accelerate the folding of proteins. It catalyzes the cis-trans isomerization of proline imidic peptide bonds in oligopeptides (PubMed:1996117). Plays a role in feedback inhibition of the pathway synthesizing the aspartate family of amino acids by binding to aspartokinase (PubMed:9315655).</text>
</comment>
<comment type="catalytic activity">
    <reaction evidence="6">
        <text>[protein]-peptidylproline (omega=180) = [protein]-peptidylproline (omega=0)</text>
        <dbReference type="Rhea" id="RHEA:16237"/>
        <dbReference type="Rhea" id="RHEA-COMP:10747"/>
        <dbReference type="Rhea" id="RHEA-COMP:10748"/>
        <dbReference type="ChEBI" id="CHEBI:83833"/>
        <dbReference type="ChEBI" id="CHEBI:83834"/>
        <dbReference type="EC" id="5.2.1.8"/>
    </reaction>
</comment>
<comment type="subunit">
    <text evidence="2 3 8">Interacts with HOM3; the interaction is direct, plays a role in feedback inhibition of aspartokinase by threonine, and is inhibited by tacrolimus and sirolimus (PubMed:9315655). Interacts with HMO1 (PubMed:10049913). Interacts with FAP1 (PubMed:10998178).</text>
</comment>
<comment type="interaction">
    <interactant intactId="EBI-6961">
        <id>P20081</id>
    </interactant>
    <interactant intactId="EBI-22787">
        <id>P43573</id>
        <label>BUD27</label>
    </interactant>
    <organismsDiffer>false</organismsDiffer>
    <experiments>2</experiments>
</comment>
<comment type="interaction">
    <interactant intactId="EBI-6961">
        <id>P20081</id>
    </interactant>
    <interactant intactId="EBI-2430">
        <id>P10869</id>
        <label>HOM3</label>
    </interactant>
    <organismsDiffer>false</organismsDiffer>
    <experiments>4</experiments>
</comment>
<comment type="interaction">
    <interactant intactId="EBI-6961">
        <id>P20081</id>
    </interactant>
    <interactant intactId="EBI-19374">
        <id>P35169</id>
        <label>TOR1</label>
    </interactant>
    <organismsDiffer>false</organismsDiffer>
    <experiments>4</experiments>
</comment>
<comment type="interaction">
    <interactant intactId="EBI-6961">
        <id>P20081</id>
    </interactant>
    <interactant intactId="EBI-19385">
        <id>P32600</id>
        <label>TOR2</label>
    </interactant>
    <organismsDiffer>false</organismsDiffer>
    <experiments>3</experiments>
</comment>
<comment type="interaction">
    <interactant intactId="EBI-6961">
        <id>P20081</id>
    </interactant>
    <interactant intactId="EBI-1382370">
        <id>Q9FR53</id>
        <label>TOR</label>
    </interactant>
    <organismsDiffer>true</organismsDiffer>
    <experiments>3</experiments>
</comment>
<comment type="subcellular location">
    <subcellularLocation>
        <location>Cytoplasm</location>
    </subcellularLocation>
    <subcellularLocation>
        <location evidence="5">Mitochondrion</location>
    </subcellularLocation>
</comment>
<comment type="disruption phenotype">
    <text evidence="7 8">Resistance to hydroxynorvaline, a toxic analog of threonine (PubMed:9315655). Double knockout with THR1 is lethal (PubMed:20305002).</text>
</comment>
<comment type="miscellaneous">
    <text evidence="6">Binds to the immunosuppressant drug FK506 and also mediates the sensitivity to rapamycin (PubMed:1996117). Rapamycin disrupts interaction with FAP1.</text>
</comment>
<comment type="miscellaneous">
    <text evidence="4">Present with 43300 molecules/cell in log phase SD medium.</text>
</comment>
<comment type="similarity">
    <text evidence="11">Belongs to the FKBP-type PPIase family. FKBP1 subfamily.</text>
</comment>
<proteinExistence type="evidence at protein level"/>
<evidence type="ECO:0000255" key="1">
    <source>
        <dbReference type="PROSITE-ProRule" id="PRU00277"/>
    </source>
</evidence>
<evidence type="ECO:0000269" key="2">
    <source>
    </source>
</evidence>
<evidence type="ECO:0000269" key="3">
    <source>
    </source>
</evidence>
<evidence type="ECO:0000269" key="4">
    <source>
    </source>
</evidence>
<evidence type="ECO:0000269" key="5">
    <source>
    </source>
</evidence>
<evidence type="ECO:0000269" key="6">
    <source>
    </source>
</evidence>
<evidence type="ECO:0000269" key="7">
    <source>
    </source>
</evidence>
<evidence type="ECO:0000269" key="8">
    <source>
    </source>
</evidence>
<evidence type="ECO:0000303" key="9">
    <source>
    </source>
</evidence>
<evidence type="ECO:0000303" key="10">
    <source>
    </source>
</evidence>
<evidence type="ECO:0000305" key="11"/>
<evidence type="ECO:0007744" key="12">
    <source>
    </source>
</evidence>
<evidence type="ECO:0007744" key="13">
    <source>
    </source>
</evidence>
<evidence type="ECO:0007744" key="14">
    <source>
    </source>
</evidence>
<evidence type="ECO:0007829" key="15">
    <source>
        <dbReference type="PDB" id="1YAT"/>
    </source>
</evidence>
<sequence length="114" mass="12158">MSEVIEGNVKIDRISPGDGATFPKTGDLVTIHYTGTLENGQKFDSSVDRGSPFQCNIGVGQVIKGWDVGIPKLSVGEKARLTIPGPYAYGPRGFPGLIPPNSTLVFDVELLKVN</sequence>
<organism>
    <name type="scientific">Saccharomyces cerevisiae (strain ATCC 204508 / S288c)</name>
    <name type="common">Baker's yeast</name>
    <dbReference type="NCBI Taxonomy" id="559292"/>
    <lineage>
        <taxon>Eukaryota</taxon>
        <taxon>Fungi</taxon>
        <taxon>Dikarya</taxon>
        <taxon>Ascomycota</taxon>
        <taxon>Saccharomycotina</taxon>
        <taxon>Saccharomycetes</taxon>
        <taxon>Saccharomycetales</taxon>
        <taxon>Saccharomycetaceae</taxon>
        <taxon>Saccharomyces</taxon>
    </lineage>
</organism>
<gene>
    <name type="primary">FPR1</name>
    <name type="synonym">FKB1</name>
    <name evidence="9" type="synonym">RBP1</name>
    <name type="ordered locus">YNL135C</name>
    <name type="ORF">N1213</name>
    <name type="ORF">N1845</name>
</gene>
<reference key="1">
    <citation type="journal article" date="1991" name="Proc. Natl. Acad. Sci. U.S.A.">
        <title>FKB1 encodes a nonessential FK 506-binding protein in Saccharomyces cerevisiae and contains regions suggesting homology to the cyclophilins.</title>
        <authorList>
            <person name="Wiederrecht G.J."/>
            <person name="Brizuela L."/>
            <person name="Elliston K.O."/>
            <person name="Sigal N.H."/>
            <person name="Siekierka J.J."/>
        </authorList>
    </citation>
    <scope>NUCLEOTIDE SEQUENCE</scope>
</reference>
<reference key="2">
    <citation type="journal article" date="1991" name="Proc. Natl. Acad. Sci. U.S.A.">
        <title>FK 506-binding protein proline rotamase is a target for the immunosuppressive agent FK 506 in Saccharomyces cerevisiae.</title>
        <authorList>
            <person name="Heitman J."/>
            <person name="Movva R.N."/>
            <person name="Hiestand P.C."/>
            <person name="Hall M.N."/>
        </authorList>
    </citation>
    <scope>NUCLEOTIDE SEQUENCE [GENOMIC DNA]</scope>
</reference>
<reference key="3">
    <citation type="journal article" date="1991" name="Mol. Cell. Biol.">
        <title>Rapamycin sensitivity in Saccharomyces cerevisiae is mediated by a peptidyl-prolyl cis-trans isomerase related to human FK506-binding protein.</title>
        <authorList>
            <person name="Koltin Y."/>
            <person name="Faucette L."/>
            <person name="Bergsma D.J."/>
            <person name="Levy M.A."/>
            <person name="Cafferkey R."/>
            <person name="Koser P.L."/>
            <person name="Johnson R.K."/>
            <person name="Livi G.P."/>
        </authorList>
    </citation>
    <scope>NUCLEOTIDE SEQUENCE [MRNA]</scope>
    <scope>FUNCTION</scope>
    <scope>CATALYTIC ACTIVITY</scope>
</reference>
<reference key="4">
    <citation type="journal article" date="1995" name="Yeast">
        <title>A 43.5 kb segment of yeast chromosome XIV, which contains MFA2, MEP2, CAP/SRV2, NAM9, FKB1/FPR1/RBP1, MOM22 and CPT1, predicts an adenosine deaminase gene and 14 new open reading frames.</title>
        <authorList>
            <person name="Mallet L."/>
            <person name="Bussereau F."/>
            <person name="Jacquet M."/>
        </authorList>
    </citation>
    <scope>NUCLEOTIDE SEQUENCE [GENOMIC DNA]</scope>
    <source>
        <strain>ATCC 204508 / S288c</strain>
    </source>
</reference>
<reference key="5">
    <citation type="journal article" date="1997" name="Nature">
        <title>The nucleotide sequence of Saccharomyces cerevisiae chromosome XIV and its evolutionary implications.</title>
        <authorList>
            <person name="Philippsen P."/>
            <person name="Kleine K."/>
            <person name="Poehlmann R."/>
            <person name="Duesterhoeft A."/>
            <person name="Hamberg K."/>
            <person name="Hegemann J.H."/>
            <person name="Obermaier B."/>
            <person name="Urrestarazu L.A."/>
            <person name="Aert R."/>
            <person name="Albermann K."/>
            <person name="Altmann R."/>
            <person name="Andre B."/>
            <person name="Baladron V."/>
            <person name="Ballesta J.P.G."/>
            <person name="Becam A.-M."/>
            <person name="Beinhauer J.D."/>
            <person name="Boskovic J."/>
            <person name="Buitrago M.J."/>
            <person name="Bussereau F."/>
            <person name="Coster F."/>
            <person name="Crouzet M."/>
            <person name="D'Angelo M."/>
            <person name="Dal Pero F."/>
            <person name="De Antoni A."/>
            <person name="del Rey F."/>
            <person name="Doignon F."/>
            <person name="Domdey H."/>
            <person name="Dubois E."/>
            <person name="Fiedler T.A."/>
            <person name="Fleig U."/>
            <person name="Floeth M."/>
            <person name="Fritz C."/>
            <person name="Gaillardin C."/>
            <person name="Garcia-Cantalejo J.M."/>
            <person name="Glansdorff N."/>
            <person name="Goffeau A."/>
            <person name="Gueldener U."/>
            <person name="Herbert C.J."/>
            <person name="Heumann K."/>
            <person name="Heuss-Neitzel D."/>
            <person name="Hilbert H."/>
            <person name="Hinni K."/>
            <person name="Iraqui Houssaini I."/>
            <person name="Jacquet M."/>
            <person name="Jimenez A."/>
            <person name="Jonniaux J.-L."/>
            <person name="Karpfinger-Hartl L."/>
            <person name="Lanfranchi G."/>
            <person name="Lepingle A."/>
            <person name="Levesque H."/>
            <person name="Lyck R."/>
            <person name="Maftahi M."/>
            <person name="Mallet L."/>
            <person name="Maurer C.T.C."/>
            <person name="Messenguy F."/>
            <person name="Mewes H.-W."/>
            <person name="Moestl D."/>
            <person name="Nasr F."/>
            <person name="Nicaud J.-M."/>
            <person name="Niedenthal R.K."/>
            <person name="Pandolfo D."/>
            <person name="Pierard A."/>
            <person name="Piravandi E."/>
            <person name="Planta R.J."/>
            <person name="Pohl T.M."/>
            <person name="Purnelle B."/>
            <person name="Rebischung C."/>
            <person name="Remacha M.A."/>
            <person name="Revuelta J.L."/>
            <person name="Rinke M."/>
            <person name="Saiz J.E."/>
            <person name="Sartorello F."/>
            <person name="Scherens B."/>
            <person name="Sen-Gupta M."/>
            <person name="Soler-Mira A."/>
            <person name="Urbanus J.H.M."/>
            <person name="Valle G."/>
            <person name="Van Dyck L."/>
            <person name="Verhasselt P."/>
            <person name="Vierendeels F."/>
            <person name="Vissers S."/>
            <person name="Voet M."/>
            <person name="Volckaert G."/>
            <person name="Wach A."/>
            <person name="Wambutt R."/>
            <person name="Wedler H."/>
            <person name="Zollner A."/>
            <person name="Hani J."/>
        </authorList>
    </citation>
    <scope>NUCLEOTIDE SEQUENCE [LARGE SCALE GENOMIC DNA]</scope>
    <source>
        <strain>ATCC 204508 / S288c</strain>
    </source>
</reference>
<reference key="6">
    <citation type="journal article" date="2014" name="G3 (Bethesda)">
        <title>The reference genome sequence of Saccharomyces cerevisiae: Then and now.</title>
        <authorList>
            <person name="Engel S.R."/>
            <person name="Dietrich F.S."/>
            <person name="Fisk D.G."/>
            <person name="Binkley G."/>
            <person name="Balakrishnan R."/>
            <person name="Costanzo M.C."/>
            <person name="Dwight S.S."/>
            <person name="Hitz B.C."/>
            <person name="Karra K."/>
            <person name="Nash R.S."/>
            <person name="Weng S."/>
            <person name="Wong E.D."/>
            <person name="Lloyd P."/>
            <person name="Skrzypek M.S."/>
            <person name="Miyasato S.R."/>
            <person name="Simison M."/>
            <person name="Cherry J.M."/>
        </authorList>
    </citation>
    <scope>GENOME REANNOTATION</scope>
    <source>
        <strain>ATCC 204508 / S288c</strain>
    </source>
</reference>
<reference key="7">
    <citation type="journal article" date="2007" name="Genome Res.">
        <title>Approaching a complete repository of sequence-verified protein-encoding clones for Saccharomyces cerevisiae.</title>
        <authorList>
            <person name="Hu Y."/>
            <person name="Rolfs A."/>
            <person name="Bhullar B."/>
            <person name="Murthy T.V.S."/>
            <person name="Zhu C."/>
            <person name="Berger M.F."/>
            <person name="Camargo A.A."/>
            <person name="Kelley F."/>
            <person name="McCarron S."/>
            <person name="Jepson D."/>
            <person name="Richardson A."/>
            <person name="Raphael J."/>
            <person name="Moreira D."/>
            <person name="Taycher E."/>
            <person name="Zuo D."/>
            <person name="Mohr S."/>
            <person name="Kane M.F."/>
            <person name="Williamson J."/>
            <person name="Simpson A.J.G."/>
            <person name="Bulyk M.L."/>
            <person name="Harlow E."/>
            <person name="Marsischky G."/>
            <person name="Kolodner R.D."/>
            <person name="LaBaer J."/>
        </authorList>
    </citation>
    <scope>NUCLEOTIDE SEQUENCE [GENOMIC DNA]</scope>
    <source>
        <strain>ATCC 204508 / S288c</strain>
    </source>
</reference>
<reference key="8">
    <citation type="journal article" date="1990" name="J. Biol. Chem.">
        <title>The cytosolic-binding protein for the immunosuppressant FK-506 is both a ubiquitous and highly conserved peptidyl-prolyl cis-trans isomerase.</title>
        <authorList>
            <person name="Siekierka J.J."/>
            <person name="Widerrecht G."/>
            <person name="Greulich H."/>
            <person name="Boulton D."/>
            <person name="Hung S.H.Y."/>
            <person name="Cryan J."/>
            <person name="Hodges P.J."/>
            <person name="Sigal N.H."/>
        </authorList>
    </citation>
    <scope>PROTEIN SEQUENCE OF 67-100</scope>
</reference>
<reference key="9">
    <citation type="journal article" date="1997" name="Mol. Cell. Biol.">
        <title>FKBP12 physically and functionally interacts with aspartokinase in Saccharomyces cerevisiae.</title>
        <authorList>
            <person name="Alarcon C.M."/>
            <person name="Heitman J."/>
        </authorList>
    </citation>
    <scope>FUNCTION</scope>
    <scope>INTERACTION WITH HOM3</scope>
    <scope>DISRUPTION PHENOTYPE</scope>
    <scope>MUTAGENESIS OF PHE-43</scope>
</reference>
<reference key="10">
    <citation type="journal article" date="1999" name="Genetics">
        <title>Hmo1p, a high mobility group 1/2 homolog, genetically and physically interacts with the yeast FKBP12 prolyl isomerase.</title>
        <authorList>
            <person name="Dolinski K.J."/>
            <person name="Heitman J."/>
        </authorList>
    </citation>
    <scope>INTERACTION WITH HMO1</scope>
</reference>
<reference key="11">
    <citation type="journal article" date="2000" name="Mol. Microbiol.">
        <title>FAP1, a homologue of human transcription factor NF-X1, competes with rapamycin for binding to FKBP12 in yeast.</title>
        <authorList>
            <person name="Kunz J."/>
            <person name="Loeschmann A."/>
            <person name="Deuter-Reinhard M."/>
            <person name="Hall M.N."/>
        </authorList>
    </citation>
    <scope>INTERACTION WITH FAP1</scope>
    <scope>MUTAGENESIS OF PHE-43; ASP-44; ASP-48; ARG-49; PHE-94 AND PHE-106</scope>
</reference>
<reference key="12">
    <citation type="journal article" date="2003" name="Nature">
        <title>Global analysis of protein expression in yeast.</title>
        <authorList>
            <person name="Ghaemmaghami S."/>
            <person name="Huh W.-K."/>
            <person name="Bower K."/>
            <person name="Howson R.W."/>
            <person name="Belle A."/>
            <person name="Dephoure N."/>
            <person name="O'Shea E.K."/>
            <person name="Weissman J.S."/>
        </authorList>
    </citation>
    <scope>LEVEL OF PROTEIN EXPRESSION [LARGE SCALE ANALYSIS]</scope>
</reference>
<reference key="13">
    <citation type="journal article" date="2006" name="J. Proteome Res.">
        <title>Toward the complete yeast mitochondrial proteome: multidimensional separation techniques for mitochondrial proteomics.</title>
        <authorList>
            <person name="Reinders J."/>
            <person name="Zahedi R.P."/>
            <person name="Pfanner N."/>
            <person name="Meisinger C."/>
            <person name="Sickmann A."/>
        </authorList>
    </citation>
    <scope>SUBCELLULAR LOCATION [LARGE SCALE ANALYSIS]</scope>
    <scope>IDENTIFICATION BY MASS SPECTROMETRY</scope>
</reference>
<reference key="14">
    <citation type="journal article" date="2008" name="Mol. Cell. Proteomics">
        <title>A multidimensional chromatography technology for in-depth phosphoproteome analysis.</title>
        <authorList>
            <person name="Albuquerque C.P."/>
            <person name="Smolka M.B."/>
            <person name="Payne S.H."/>
            <person name="Bafna V."/>
            <person name="Eng J."/>
            <person name="Zhou H."/>
        </authorList>
    </citation>
    <scope>PHOSPHORYLATION [LARGE SCALE ANALYSIS] AT SER-51</scope>
    <scope>IDENTIFICATION BY MASS SPECTROMETRY [LARGE SCALE ANALYSIS]</scope>
</reference>
<reference key="15">
    <citation type="journal article" date="2009" name="Science">
        <title>Global analysis of Cdk1 substrate phosphorylation sites provides insights into evolution.</title>
        <authorList>
            <person name="Holt L.J."/>
            <person name="Tuch B.B."/>
            <person name="Villen J."/>
            <person name="Johnson A.D."/>
            <person name="Gygi S.P."/>
            <person name="Morgan D.O."/>
        </authorList>
    </citation>
    <scope>PHOSPHORYLATION [LARGE SCALE ANALYSIS] AT SER-51</scope>
    <scope>IDENTIFICATION BY MASS SPECTROMETRY [LARGE SCALE ANALYSIS]</scope>
</reference>
<reference key="16">
    <citation type="journal article" date="2010" name="Eukaryot. Cell">
        <title>Homoserine toxicity in Saccharomyces cerevisiae and Candida albicans homoserine kinase (thr1Delta) mutants.</title>
        <authorList>
            <person name="Kingsbury J.M."/>
            <person name="McCusker J.H."/>
        </authorList>
    </citation>
    <scope>DISRUPTION PHENOTYPE</scope>
    <source>
        <strain evidence="10">YJM 145</strain>
    </source>
</reference>
<reference key="17">
    <citation type="journal article" date="2012" name="Proc. Natl. Acad. Sci. U.S.A.">
        <title>N-terminal acetylome analyses and functional insights of the N-terminal acetyltransferase NatB.</title>
        <authorList>
            <person name="Van Damme P."/>
            <person name="Lasa M."/>
            <person name="Polevoda B."/>
            <person name="Gazquez C."/>
            <person name="Elosegui-Artola A."/>
            <person name="Kim D.S."/>
            <person name="De Juan-Pardo E."/>
            <person name="Demeyer K."/>
            <person name="Hole K."/>
            <person name="Larrea E."/>
            <person name="Timmerman E."/>
            <person name="Prieto J."/>
            <person name="Arnesen T."/>
            <person name="Sherman F."/>
            <person name="Gevaert K."/>
            <person name="Aldabe R."/>
        </authorList>
    </citation>
    <scope>ACETYLATION [LARGE SCALE ANALYSIS] AT SER-2</scope>
    <scope>CLEAVAGE OF INITIATOR METHIONINE [LARGE SCALE ANALYSIS]</scope>
    <scope>IDENTIFICATION BY MASS SPECTROMETRY [LARGE SCALE ANALYSIS]</scope>
</reference>
<reference key="18">
    <citation type="journal article" date="1993" name="J. Biol. Chem.">
        <title>Improved calcineurin inhibition by yeast FKBP12-drug complexes. Crystallographic and functional analysis.</title>
        <authorList>
            <person name="Rotonda J."/>
            <person name="Burbaum J.J."/>
            <person name="Chan H.K."/>
            <person name="Marcy A.I."/>
            <person name="Becker J.W."/>
        </authorList>
    </citation>
    <scope>X-RAY CRYSTALLOGRAPHY (2.5 ANGSTROMS)</scope>
</reference>
<feature type="initiator methionine" description="Removed" evidence="14">
    <location>
        <position position="1"/>
    </location>
</feature>
<feature type="chain" id="PRO_0000075305" description="FK506-binding protein 1">
    <location>
        <begin position="2"/>
        <end position="114"/>
    </location>
</feature>
<feature type="domain" description="PPIase FKBP-type" evidence="1">
    <location>
        <begin position="26"/>
        <end position="114"/>
    </location>
</feature>
<feature type="modified residue" description="N-acetylserine" evidence="14">
    <location>
        <position position="2"/>
    </location>
</feature>
<feature type="modified residue" description="Phosphoserine" evidence="12 13">
    <location>
        <position position="51"/>
    </location>
</feature>
<feature type="mutagenesis site" description="Reduces interaction with FAP1 and resistance to hydroxynorvaline, a toxic analog of threonine." evidence="3 8">
    <original>F</original>
    <variation>Y</variation>
    <location>
        <position position="43"/>
    </location>
</feature>
<feature type="mutagenesis site" description="Abrogates interaction with FAP1." evidence="3">
    <original>D</original>
    <variation>V</variation>
    <location>
        <position position="44"/>
    </location>
</feature>
<feature type="mutagenesis site" description="Abrogates interaction with FAP1." evidence="3">
    <original>D</original>
    <variation>V</variation>
    <location>
        <position position="48"/>
    </location>
</feature>
<feature type="mutagenesis site" description="Abrogates interaction with FAP1." evidence="3">
    <original>R</original>
    <variation>I</variation>
    <location>
        <position position="49"/>
    </location>
</feature>
<feature type="mutagenesis site" description="Abrogates interaction with FAP1." evidence="3">
    <original>F</original>
    <variation>V</variation>
    <location>
        <position position="94"/>
    </location>
</feature>
<feature type="mutagenesis site" description="Reduces interaction with FAP1." evidence="3">
    <original>F</original>
    <variation>Y</variation>
    <location>
        <position position="106"/>
    </location>
</feature>
<feature type="helix" evidence="15">
    <location>
        <begin position="6"/>
        <end position="8"/>
    </location>
</feature>
<feature type="strand" evidence="15">
    <location>
        <begin position="10"/>
        <end position="15"/>
    </location>
</feature>
<feature type="strand" evidence="15">
    <location>
        <begin position="28"/>
        <end position="37"/>
    </location>
</feature>
<feature type="strand" evidence="15">
    <location>
        <begin position="42"/>
        <end position="46"/>
    </location>
</feature>
<feature type="turn" evidence="15">
    <location>
        <begin position="47"/>
        <end position="50"/>
    </location>
</feature>
<feature type="strand" evidence="15">
    <location>
        <begin position="53"/>
        <end position="56"/>
    </location>
</feature>
<feature type="strand" evidence="15">
    <location>
        <begin position="59"/>
        <end position="62"/>
    </location>
</feature>
<feature type="helix" evidence="15">
    <location>
        <begin position="64"/>
        <end position="69"/>
    </location>
</feature>
<feature type="helix" evidence="15">
    <location>
        <begin position="70"/>
        <end position="72"/>
    </location>
</feature>
<feature type="strand" evidence="15">
    <location>
        <begin position="78"/>
        <end position="83"/>
    </location>
</feature>
<feature type="helix" evidence="15">
    <location>
        <begin position="85"/>
        <end position="87"/>
    </location>
</feature>
<feature type="turn" evidence="15">
    <location>
        <begin position="88"/>
        <end position="92"/>
    </location>
</feature>
<feature type="turn" evidence="15">
    <location>
        <begin position="95"/>
        <end position="97"/>
    </location>
</feature>
<feature type="strand" evidence="15">
    <location>
        <begin position="104"/>
        <end position="113"/>
    </location>
</feature>
<name>FKBP_YEAST</name>